<comment type="function">
    <text evidence="2">Receptor for TNFSF6/FASLG. The adapter molecule FADD recruits caspase CASP8 to the activated receptor. The resulting death-inducing signaling complex (DISC) performs CASP8 proteolytic activation which initiates the subsequent cascade of caspases (aspartate-specific cysteine proteases) mediating apoptosis. FAS-mediated apoptosis may have a role in the induction of peripheral tolerance, in the antigen-stimulated suicide of mature T-cells, or both (By similarity).</text>
</comment>
<comment type="subunit">
    <text evidence="2 3">Component of the death-induced signaling complex (DISC) composed of cell surface receptor FAS/CD95, adapter protein FADD and the CASP8 protease; recruitment of CASP8 to the complex is required for processing of CASP8 into the p18 and p10 subunits (By similarity). Interacts directly (via DED domain) with NOL3 (via CARD domain); inhibits death-inducing signaling complex (DISC) assembly by inhibiting the increase in FAS-FADD binding induced by FAS activation (By similarity). Binds DAXX. Interacts with HIPK3 (By similarity). Part of a complex containing HIPK3 and FADD (By similarity). Binds RIPK1 and FAIM2. Interacts with BABAM2 and FEM1B. Interacts with CALM (By similarity). In the absence of stimulation, interacts with BIRC2, DDX3X and GSK3B. The interaction with BIRC2 and DDX3X is further enhanced upon receptor stimulation and accompanied by DDX3X and BIRC2 cleavage (By similarity).</text>
</comment>
<comment type="subcellular location">
    <subcellularLocation>
        <location evidence="4">Cell membrane</location>
        <topology evidence="4">Single-pass type I membrane protein</topology>
    </subcellularLocation>
    <subcellularLocation>
        <location evidence="2">Membrane raft</location>
    </subcellularLocation>
</comment>
<comment type="domain">
    <text>Contains a death domain involved in the binding of FADD, and maybe to other cytosolic adapter proteins.</text>
</comment>
<comment type="PTM">
    <text evidence="2">Palmitoylated. Palmitoylation by ZDHHC7 prevents the lysosomal degradation of FAS regulating its expression at the plasma membrane.</text>
</comment>
<keyword id="KW-0053">Apoptosis</keyword>
<keyword id="KW-0112">Calmodulin-binding</keyword>
<keyword id="KW-1003">Cell membrane</keyword>
<keyword id="KW-1015">Disulfide bond</keyword>
<keyword id="KW-0325">Glycoprotein</keyword>
<keyword id="KW-0449">Lipoprotein</keyword>
<keyword id="KW-0472">Membrane</keyword>
<keyword id="KW-0564">Palmitate</keyword>
<keyword id="KW-0597">Phosphoprotein</keyword>
<keyword id="KW-0675">Receptor</keyword>
<keyword id="KW-1185">Reference proteome</keyword>
<keyword id="KW-0677">Repeat</keyword>
<keyword id="KW-0732">Signal</keyword>
<keyword id="KW-0812">Transmembrane</keyword>
<keyword id="KW-1133">Transmembrane helix</keyword>
<organism>
    <name type="scientific">Macaca mulatta</name>
    <name type="common">Rhesus macaque</name>
    <dbReference type="NCBI Taxonomy" id="9544"/>
    <lineage>
        <taxon>Eukaryota</taxon>
        <taxon>Metazoa</taxon>
        <taxon>Chordata</taxon>
        <taxon>Craniata</taxon>
        <taxon>Vertebrata</taxon>
        <taxon>Euteleostomi</taxon>
        <taxon>Mammalia</taxon>
        <taxon>Eutheria</taxon>
        <taxon>Euarchontoglires</taxon>
        <taxon>Primates</taxon>
        <taxon>Haplorrhini</taxon>
        <taxon>Catarrhini</taxon>
        <taxon>Cercopithecidae</taxon>
        <taxon>Cercopithecinae</taxon>
        <taxon>Macaca</taxon>
    </lineage>
</organism>
<feature type="signal peptide" evidence="5">
    <location>
        <begin position="1"/>
        <end position="25"/>
    </location>
</feature>
<feature type="chain" id="PRO_0000034565" description="Tumor necrosis factor receptor superfamily member 6">
    <location>
        <begin position="26"/>
        <end position="333"/>
    </location>
</feature>
<feature type="topological domain" description="Extracellular" evidence="5">
    <location>
        <begin position="26"/>
        <end position="173"/>
    </location>
</feature>
<feature type="transmembrane region" description="Helical" evidence="5">
    <location>
        <begin position="174"/>
        <end position="194"/>
    </location>
</feature>
<feature type="topological domain" description="Cytoplasmic" evidence="5">
    <location>
        <begin position="195"/>
        <end position="333"/>
    </location>
</feature>
<feature type="repeat" description="TNFR-Cys 1">
    <location>
        <begin position="47"/>
        <end position="83"/>
    </location>
</feature>
<feature type="repeat" description="TNFR-Cys 2">
    <location>
        <begin position="84"/>
        <end position="127"/>
    </location>
</feature>
<feature type="repeat" description="TNFR-Cys 3">
    <location>
        <begin position="128"/>
        <end position="166"/>
    </location>
</feature>
<feature type="domain" description="Death" evidence="6">
    <location>
        <begin position="228"/>
        <end position="312"/>
    </location>
</feature>
<feature type="region of interest" description="Interaction with HIPK3" evidence="1">
    <location>
        <begin position="211"/>
        <end position="315"/>
    </location>
</feature>
<feature type="region of interest" description="Interaction with CALM" evidence="2">
    <location>
        <begin position="228"/>
        <end position="252"/>
    </location>
</feature>
<feature type="modified residue" description="Phosphothreonine" evidence="3">
    <location>
        <position position="213"/>
    </location>
</feature>
<feature type="modified residue" description="Phosphoserine" evidence="2">
    <location>
        <position position="223"/>
    </location>
</feature>
<feature type="modified residue" description="Phosphothreonine" evidence="3">
    <location>
        <position position="320"/>
    </location>
</feature>
<feature type="lipid moiety-binding region" description="S-palmitoyl cysteine" evidence="2">
    <location>
        <position position="198"/>
    </location>
</feature>
<feature type="glycosylation site" description="N-linked (GlcNAc...) asparagine" evidence="5">
    <location>
        <position position="118"/>
    </location>
</feature>
<feature type="disulfide bond" evidence="7">
    <location>
        <begin position="59"/>
        <end position="73"/>
    </location>
</feature>
<feature type="disulfide bond" evidence="7">
    <location>
        <begin position="63"/>
        <end position="82"/>
    </location>
</feature>
<feature type="disulfide bond" evidence="7">
    <location>
        <begin position="85"/>
        <end position="101"/>
    </location>
</feature>
<feature type="disulfide bond" evidence="7">
    <location>
        <begin position="104"/>
        <end position="119"/>
    </location>
</feature>
<feature type="disulfide bond" evidence="7">
    <location>
        <begin position="107"/>
        <end position="127"/>
    </location>
</feature>
<feature type="disulfide bond" evidence="7">
    <location>
        <begin position="129"/>
        <end position="143"/>
    </location>
</feature>
<feature type="disulfide bond" evidence="7">
    <location>
        <begin position="146"/>
        <end position="157"/>
    </location>
</feature>
<feature type="disulfide bond" evidence="7">
    <location>
        <begin position="149"/>
        <end position="165"/>
    </location>
</feature>
<feature type="sequence variant" evidence="8">
    <original>V</original>
    <variation>A</variation>
    <location>
        <position position="75"/>
    </location>
</feature>
<feature type="sequence variant" evidence="8">
    <original>E</original>
    <variation>K</variation>
    <location>
        <position position="89"/>
    </location>
</feature>
<feature type="sequence variant" evidence="8">
    <original>E</original>
    <variation>K</variation>
    <location>
        <position position="196"/>
    </location>
</feature>
<feature type="sequence variant" evidence="8">
    <original>R</original>
    <variation>H</variation>
    <location>
        <position position="201"/>
    </location>
</feature>
<accession>Q9BDP2</accession>
<name>TNR6_MACMU</name>
<reference key="1">
    <citation type="journal article" date="2001" name="Immunogenetics">
        <title>Cloning, sequencing, and homology analysis of nonhuman primate Fas/Fas-ligand and co-stimulatory molecules.</title>
        <authorList>
            <person name="Villinger F.J."/>
            <person name="Bostik P."/>
            <person name="Mayne A.E."/>
            <person name="King C.L."/>
            <person name="Genain C.P."/>
            <person name="Weiss W.R."/>
            <person name="Ansari A.A."/>
        </authorList>
    </citation>
    <scope>NUCLEOTIDE SEQUENCE [MRNA]</scope>
    <scope>VARIANTS ALA-75; LYS-89; LYS-196 AND HIS-201</scope>
</reference>
<evidence type="ECO:0000250" key="1"/>
<evidence type="ECO:0000250" key="2">
    <source>
        <dbReference type="UniProtKB" id="P25445"/>
    </source>
</evidence>
<evidence type="ECO:0000250" key="3">
    <source>
        <dbReference type="UniProtKB" id="P25446"/>
    </source>
</evidence>
<evidence type="ECO:0000250" key="4">
    <source>
        <dbReference type="UniProtKB" id="P51867"/>
    </source>
</evidence>
<evidence type="ECO:0000255" key="5"/>
<evidence type="ECO:0000255" key="6">
    <source>
        <dbReference type="PROSITE-ProRule" id="PRU00064"/>
    </source>
</evidence>
<evidence type="ECO:0000255" key="7">
    <source>
        <dbReference type="PROSITE-ProRule" id="PRU00206"/>
    </source>
</evidence>
<evidence type="ECO:0000269" key="8">
    <source>
    </source>
</evidence>
<proteinExistence type="evidence at transcript level"/>
<sequence length="333" mass="37468">MLGIWTLLPLVLTSVVRLLSKCVNAQVTDISSKGFELRKIVTTIETQNLEGLHHEGQFCRNPCPPGERKARDCTVNEDEPDCVPCQEGEEYTDKGHFSSKCRRCRLCDEGHGLEVEINCTRTQNTKCRCKPNFFCNSAVCEHCDPCTKCKHGIIEECTLTSNTKCKEEDSRSDLLWLCLLLLLLLIPPIVYVVIKEPCRKRRKENQGPHESTTLNPETAINLSDVDLSKYITTIAGAMTLSQVKDFVRKNGVSEAKIDEIKNDNVQDTAEQKVQLLRNWYQLHGKKDACDTLIKGLKTADLCTLAEKIHAVILKDITSDTENSNFGNEVQNLV</sequence>
<gene>
    <name type="primary">FAS</name>
    <name type="synonym">APT1</name>
    <name type="synonym">TNFRSF6</name>
</gene>
<dbReference type="EMBL" id="AF344833">
    <property type="protein sequence ID" value="AAK37529.1"/>
    <property type="molecule type" value="mRNA"/>
</dbReference>
<dbReference type="RefSeq" id="NP_001028105.1">
    <property type="nucleotide sequence ID" value="NM_001032933.2"/>
</dbReference>
<dbReference type="SMR" id="Q9BDP2"/>
<dbReference type="FunCoup" id="Q9BDP2">
    <property type="interactions" value="1379"/>
</dbReference>
<dbReference type="STRING" id="9544.ENSMMUP00000061933"/>
<dbReference type="GlyCosmos" id="Q9BDP2">
    <property type="glycosylation" value="1 site, No reported glycans"/>
</dbReference>
<dbReference type="PaxDb" id="9544-ENSMMUP00000014651"/>
<dbReference type="GeneID" id="574332"/>
<dbReference type="KEGG" id="mcc:574332"/>
<dbReference type="CTD" id="355"/>
<dbReference type="eggNOG" id="ENOG502S0SV">
    <property type="taxonomic scope" value="Eukaryota"/>
</dbReference>
<dbReference type="InParanoid" id="Q9BDP2"/>
<dbReference type="OrthoDB" id="8848202at2759"/>
<dbReference type="Proteomes" id="UP000006718">
    <property type="component" value="Unassembled WGS sequence"/>
</dbReference>
<dbReference type="GO" id="GO:0031265">
    <property type="term" value="C:CD95 death-inducing signaling complex"/>
    <property type="evidence" value="ECO:0000318"/>
    <property type="project" value="GO_Central"/>
</dbReference>
<dbReference type="GO" id="GO:0009897">
    <property type="term" value="C:external side of plasma membrane"/>
    <property type="evidence" value="ECO:0000318"/>
    <property type="project" value="GO_Central"/>
</dbReference>
<dbReference type="GO" id="GO:0045121">
    <property type="term" value="C:membrane raft"/>
    <property type="evidence" value="ECO:0000318"/>
    <property type="project" value="GO_Central"/>
</dbReference>
<dbReference type="GO" id="GO:0005516">
    <property type="term" value="F:calmodulin binding"/>
    <property type="evidence" value="ECO:0000250"/>
    <property type="project" value="UniProtKB"/>
</dbReference>
<dbReference type="GO" id="GO:0005031">
    <property type="term" value="F:tumor necrosis factor receptor activity"/>
    <property type="evidence" value="ECO:0000318"/>
    <property type="project" value="GO_Central"/>
</dbReference>
<dbReference type="GO" id="GO:0006924">
    <property type="term" value="P:activation-induced cell death of T cells"/>
    <property type="evidence" value="ECO:0000318"/>
    <property type="project" value="GO_Central"/>
</dbReference>
<dbReference type="GO" id="GO:0006955">
    <property type="term" value="P:immune response"/>
    <property type="evidence" value="ECO:0007669"/>
    <property type="project" value="InterPro"/>
</dbReference>
<dbReference type="GO" id="GO:0097049">
    <property type="term" value="P:motor neuron apoptotic process"/>
    <property type="evidence" value="ECO:0000318"/>
    <property type="project" value="GO_Central"/>
</dbReference>
<dbReference type="GO" id="GO:0097527">
    <property type="term" value="P:necroptotic signaling pathway"/>
    <property type="evidence" value="ECO:0000318"/>
    <property type="project" value="GO_Central"/>
</dbReference>
<dbReference type="GO" id="GO:0043066">
    <property type="term" value="P:negative regulation of apoptotic process"/>
    <property type="evidence" value="ECO:0000318"/>
    <property type="project" value="GO_Central"/>
</dbReference>
<dbReference type="GO" id="GO:0032872">
    <property type="term" value="P:regulation of stress-activated MAPK cascade"/>
    <property type="evidence" value="ECO:0000318"/>
    <property type="project" value="GO_Central"/>
</dbReference>
<dbReference type="CDD" id="cd08316">
    <property type="entry name" value="Death_FAS_TNFRSF6"/>
    <property type="match status" value="1"/>
</dbReference>
<dbReference type="CDD" id="cd10579">
    <property type="entry name" value="TNFRSF6"/>
    <property type="match status" value="1"/>
</dbReference>
<dbReference type="FunFam" id="1.10.533.10:FF:000057">
    <property type="entry name" value="Tumor necrosis factor receptor superfamily member 6"/>
    <property type="match status" value="1"/>
</dbReference>
<dbReference type="FunFam" id="2.10.50.10:FF:000021">
    <property type="entry name" value="Tumor necrosis factor receptor superfamily member 6"/>
    <property type="match status" value="1"/>
</dbReference>
<dbReference type="Gene3D" id="1.10.533.10">
    <property type="entry name" value="Death Domain, Fas"/>
    <property type="match status" value="1"/>
</dbReference>
<dbReference type="Gene3D" id="2.10.50.10">
    <property type="entry name" value="Tumor Necrosis Factor Receptor, subunit A, domain 2"/>
    <property type="match status" value="2"/>
</dbReference>
<dbReference type="InterPro" id="IPR011029">
    <property type="entry name" value="DEATH-like_dom_sf"/>
</dbReference>
<dbReference type="InterPro" id="IPR000488">
    <property type="entry name" value="Death_dom"/>
</dbReference>
<dbReference type="InterPro" id="IPR008063">
    <property type="entry name" value="Fas_rcpt"/>
</dbReference>
<dbReference type="InterPro" id="IPR001368">
    <property type="entry name" value="TNFR/NGFR_Cys_rich_reg"/>
</dbReference>
<dbReference type="InterPro" id="IPR033998">
    <property type="entry name" value="TNFRSF6_death"/>
</dbReference>
<dbReference type="InterPro" id="IPR033999">
    <property type="entry name" value="TNFRSF6_N"/>
</dbReference>
<dbReference type="PANTHER" id="PTHR46874">
    <property type="entry name" value="TUMOR NECROSIS FACTOR RECEPTOR SUPERFAMILY MEMBER 6"/>
    <property type="match status" value="1"/>
</dbReference>
<dbReference type="PANTHER" id="PTHR46874:SF1">
    <property type="entry name" value="TUMOR NECROSIS FACTOR RECEPTOR SUPERFAMILY MEMBER 6"/>
    <property type="match status" value="1"/>
</dbReference>
<dbReference type="Pfam" id="PF00531">
    <property type="entry name" value="Death"/>
    <property type="match status" value="1"/>
</dbReference>
<dbReference type="Pfam" id="PF00020">
    <property type="entry name" value="TNFR_c6"/>
    <property type="match status" value="2"/>
</dbReference>
<dbReference type="PRINTS" id="PR01680">
    <property type="entry name" value="TNFACTORR6"/>
</dbReference>
<dbReference type="SMART" id="SM00005">
    <property type="entry name" value="DEATH"/>
    <property type="match status" value="1"/>
</dbReference>
<dbReference type="SMART" id="SM00208">
    <property type="entry name" value="TNFR"/>
    <property type="match status" value="2"/>
</dbReference>
<dbReference type="SUPFAM" id="SSF47986">
    <property type="entry name" value="DEATH domain"/>
    <property type="match status" value="1"/>
</dbReference>
<dbReference type="SUPFAM" id="SSF57586">
    <property type="entry name" value="TNF receptor-like"/>
    <property type="match status" value="2"/>
</dbReference>
<dbReference type="PROSITE" id="PS50017">
    <property type="entry name" value="DEATH_DOMAIN"/>
    <property type="match status" value="1"/>
</dbReference>
<dbReference type="PROSITE" id="PS00652">
    <property type="entry name" value="TNFR_NGFR_1"/>
    <property type="match status" value="2"/>
</dbReference>
<dbReference type="PROSITE" id="PS50050">
    <property type="entry name" value="TNFR_NGFR_2"/>
    <property type="match status" value="2"/>
</dbReference>
<protein>
    <recommendedName>
        <fullName>Tumor necrosis factor receptor superfamily member 6</fullName>
    </recommendedName>
    <alternativeName>
        <fullName>Apo-1 antigen</fullName>
    </alternativeName>
    <alternativeName>
        <fullName>Apoptosis-mediating surface antigen FAS</fullName>
    </alternativeName>
    <alternativeName>
        <fullName>FASLG receptor</fullName>
    </alternativeName>
    <cdAntigenName>CD95</cdAntigenName>
</protein>